<comment type="function">
    <text evidence="1">Structural component of the bacteriophage tail which consists of a contractile sheath, a tube and a baseplate. The central cylindrical segment of the tail consists of a rigid tube, composed of multiple copies of gp19, surrounded by the outer contractile sheath assembled from gp18 subunits. A total of 138 copies of gp18 arranged into 23 hexameric rings constitutes the sheath. During infection, contraction of the sheath drives the central tube through the host outer membrane, creating a channel for DNA ejection from the capsid into the host cell.</text>
</comment>
<comment type="subunit">
    <text>Hexamer.</text>
</comment>
<comment type="subcellular location">
    <subcellularLocation>
        <location evidence="2">Virion</location>
    </subcellularLocation>
</comment>
<comment type="similarity">
    <text evidence="3">Belongs to the myoviridae tail sheath protein family.</text>
</comment>
<evidence type="ECO:0000269" key="1">
    <source>
    </source>
</evidence>
<evidence type="ECO:0000269" key="2">
    <source>
    </source>
</evidence>
<evidence type="ECO:0000305" key="3"/>
<evidence type="ECO:0007829" key="4">
    <source>
        <dbReference type="PDB" id="3FO8"/>
    </source>
</evidence>
<evidence type="ECO:0007829" key="5">
    <source>
        <dbReference type="PDB" id="3FOA"/>
    </source>
</evidence>
<feature type="initiator methionine" description="Removed; by host">
    <location>
        <position position="1"/>
    </location>
</feature>
<feature type="chain" id="PRO_0000165007" description="Tail sheath protein">
    <location>
        <begin position="2"/>
        <end position="659"/>
    </location>
</feature>
<feature type="sequence conflict" description="In Ref. 1; AAA32541." evidence="3" ref="1">
    <original>D</original>
    <variation>E</variation>
    <location>
        <position position="100"/>
    </location>
</feature>
<feature type="sequence conflict" description="In Ref. 1; AAA32541." evidence="3" ref="1">
    <original>GKNY</original>
    <variation>AKII</variation>
    <location>
        <begin position="148"/>
        <end position="151"/>
    </location>
</feature>
<feature type="sequence conflict" description="In Ref. 1; AAA32541." evidence="3" ref="1">
    <original>E</original>
    <variation>G</variation>
    <location>
        <position position="301"/>
    </location>
</feature>
<feature type="sequence conflict" description="In Ref. 1; AAA32541." evidence="3" ref="1">
    <original>A</original>
    <variation>V</variation>
    <location>
        <position position="399"/>
    </location>
</feature>
<feature type="sequence conflict" description="In Ref. 1; AAA32541." evidence="3" ref="1">
    <original>H</original>
    <variation>Y</variation>
    <location>
        <position position="454"/>
    </location>
</feature>
<feature type="sequence conflict" description="In Ref. 1; AAA32541." evidence="3" ref="1">
    <original>N</original>
    <variation>I</variation>
    <location>
        <position position="595"/>
    </location>
</feature>
<feature type="strand" evidence="5">
    <location>
        <begin position="26"/>
        <end position="31"/>
    </location>
</feature>
<feature type="strand" evidence="5">
    <location>
        <begin position="42"/>
        <end position="44"/>
    </location>
</feature>
<feature type="helix" evidence="5">
    <location>
        <begin position="48"/>
        <end position="54"/>
    </location>
</feature>
<feature type="turn" evidence="5">
    <location>
        <begin position="59"/>
        <end position="61"/>
    </location>
</feature>
<feature type="helix" evidence="5">
    <location>
        <begin position="62"/>
        <end position="69"/>
    </location>
</feature>
<feature type="turn" evidence="5">
    <location>
        <begin position="70"/>
        <end position="74"/>
    </location>
</feature>
<feature type="strand" evidence="5">
    <location>
        <begin position="76"/>
        <end position="82"/>
    </location>
</feature>
<feature type="turn" evidence="5">
    <location>
        <begin position="86"/>
        <end position="88"/>
    </location>
</feature>
<feature type="strand" evidence="4">
    <location>
        <begin position="93"/>
        <end position="95"/>
    </location>
</feature>
<feature type="strand" evidence="4">
    <location>
        <begin position="99"/>
        <end position="105"/>
    </location>
</feature>
<feature type="strand" evidence="4">
    <location>
        <begin position="115"/>
        <end position="120"/>
    </location>
</feature>
<feature type="strand" evidence="4">
    <location>
        <begin position="123"/>
        <end position="134"/>
    </location>
</feature>
<feature type="strand" evidence="4">
    <location>
        <begin position="140"/>
        <end position="144"/>
    </location>
</feature>
<feature type="helix" evidence="4">
    <location>
        <begin position="148"/>
        <end position="157"/>
    </location>
</feature>
<feature type="turn" evidence="4">
    <location>
        <begin position="160"/>
        <end position="162"/>
    </location>
</feature>
<feature type="strand" evidence="4">
    <location>
        <begin position="167"/>
        <end position="171"/>
    </location>
</feature>
<feature type="strand" evidence="4">
    <location>
        <begin position="181"/>
        <end position="187"/>
    </location>
</feature>
<feature type="strand" evidence="5">
    <location>
        <begin position="198"/>
        <end position="200"/>
    </location>
</feature>
<feature type="helix" evidence="4">
    <location>
        <begin position="201"/>
        <end position="205"/>
    </location>
</feature>
<feature type="helix" evidence="4">
    <location>
        <begin position="208"/>
        <end position="217"/>
    </location>
</feature>
<feature type="strand" evidence="4">
    <location>
        <begin position="222"/>
        <end position="226"/>
    </location>
</feature>
<feature type="helix" evidence="4">
    <location>
        <begin position="229"/>
        <end position="233"/>
    </location>
</feature>
<feature type="strand" evidence="4">
    <location>
        <begin position="234"/>
        <end position="240"/>
    </location>
</feature>
<feature type="helix" evidence="4">
    <location>
        <begin position="241"/>
        <end position="244"/>
    </location>
</feature>
<feature type="helix" evidence="4">
    <location>
        <begin position="245"/>
        <end position="249"/>
    </location>
</feature>
<feature type="strand" evidence="4">
    <location>
        <begin position="251"/>
        <end position="255"/>
    </location>
</feature>
<feature type="strand" evidence="4">
    <location>
        <begin position="260"/>
        <end position="262"/>
    </location>
</feature>
<feature type="helix" evidence="4">
    <location>
        <begin position="265"/>
        <end position="268"/>
    </location>
</feature>
<feature type="strand" evidence="4">
    <location>
        <begin position="278"/>
        <end position="285"/>
    </location>
</feature>
<feature type="strand" evidence="4">
    <location>
        <begin position="288"/>
        <end position="298"/>
    </location>
</feature>
<feature type="helix" evidence="4">
    <location>
        <begin position="311"/>
        <end position="316"/>
    </location>
</feature>
<feature type="strand" evidence="4">
    <location>
        <begin position="321"/>
        <end position="325"/>
    </location>
</feature>
<feature type="strand" evidence="4">
    <location>
        <begin position="336"/>
        <end position="339"/>
    </location>
</feature>
<feature type="helix" evidence="4">
    <location>
        <begin position="347"/>
        <end position="349"/>
    </location>
</feature>
<feature type="helix" evidence="4">
    <location>
        <begin position="352"/>
        <end position="358"/>
    </location>
</feature>
<feature type="helix" evidence="5">
    <location>
        <begin position="360"/>
        <end position="362"/>
    </location>
</feature>
<feature type="turn" evidence="5">
    <location>
        <begin position="365"/>
        <end position="367"/>
    </location>
</feature>
<feature type="helix" evidence="5">
    <location>
        <begin position="376"/>
        <end position="378"/>
    </location>
</feature>
<feature type="helix" evidence="5">
    <location>
        <begin position="383"/>
        <end position="400"/>
    </location>
</feature>
<feature type="helix" evidence="5">
    <location>
        <begin position="411"/>
        <end position="414"/>
    </location>
</feature>
<feature type="strand" evidence="5">
    <location>
        <begin position="415"/>
        <end position="417"/>
    </location>
</feature>
<feature type="helix" evidence="5">
    <location>
        <begin position="419"/>
        <end position="429"/>
    </location>
</feature>
<feature type="strand" evidence="5">
    <location>
        <begin position="446"/>
        <end position="449"/>
    </location>
</feature>
<feature type="strand" evidence="5">
    <location>
        <begin position="453"/>
        <end position="459"/>
    </location>
</feature>
<feature type="turn" evidence="5">
    <location>
        <begin position="460"/>
        <end position="463"/>
    </location>
</feature>
<feature type="strand" evidence="5">
    <location>
        <begin position="464"/>
        <end position="470"/>
    </location>
</feature>
<feature type="helix" evidence="5">
    <location>
        <begin position="471"/>
        <end position="480"/>
    </location>
</feature>
<feature type="strand" evidence="5">
    <location>
        <begin position="505"/>
        <end position="507"/>
    </location>
</feature>
<gene>
    <name type="primary">18</name>
</gene>
<reference key="1">
    <citation type="journal article" date="1988" name="J. Virol.">
        <title>Nucleotide sequence of the tail sheath gene of bacteriophage T4 and amino acid sequence of its product.</title>
        <authorList>
            <person name="Arisaka F."/>
            <person name="Nakako T."/>
            <person name="Takahashi H."/>
            <person name="Ishii S."/>
        </authorList>
    </citation>
    <scope>NUCLEOTIDE SEQUENCE [GENOMIC DNA]</scope>
    <scope>PARTIAL PROTEIN SEQUENCE</scope>
</reference>
<reference key="2">
    <citation type="journal article" date="2003" name="Microbiol. Mol. Biol. Rev.">
        <title>Bacteriophage T4 genome.</title>
        <authorList>
            <person name="Miller E.S."/>
            <person name="Kutter E."/>
            <person name="Mosig G."/>
            <person name="Arisaka F."/>
            <person name="Kunisawa T."/>
            <person name="Ruger W."/>
        </authorList>
    </citation>
    <scope>NUCLEOTIDE SEQUENCE [LARGE SCALE GENOMIC DNA]</scope>
</reference>
<reference key="3">
    <citation type="journal article" date="1988" name="J. Virol.">
        <title>Nucleotide sequence of the tail tube structural gene of bacteriophage T4.</title>
        <authorList>
            <person name="Arisaka F."/>
            <person name="Ishimoto L."/>
            <person name="Kassavetis G."/>
            <person name="Kumazaki T."/>
            <person name="Ishii S."/>
        </authorList>
    </citation>
    <scope>NUCLEOTIDE SEQUENCE [GENOMIC DNA] OF 639-659</scope>
</reference>
<reference key="4">
    <citation type="journal article" date="2003" name="Cell. Mol. Life Sci.">
        <title>Structure and morphogenesis of bacteriophage T4.</title>
        <authorList>
            <person name="Leiman P.G."/>
            <person name="Kanamaru S."/>
            <person name="Mesyanzhinov V.V."/>
            <person name="Arisaka F."/>
            <person name="Rossmann M.G."/>
        </authorList>
    </citation>
    <scope>FUNCTION</scope>
</reference>
<reference key="5">
    <citation type="journal article" date="2004" name="Cell">
        <title>Three-dimensional rearrangement of proteins in the tail of bacteriophage T4 on infection of its host.</title>
        <authorList>
            <person name="Leiman P.G."/>
            <person name="Chipman P.R."/>
            <person name="Kostyuchenko V.A."/>
            <person name="Mesyanzhinov V.V."/>
            <person name="Rossmann M.G."/>
        </authorList>
    </citation>
    <scope>SUBCELLULAR LOCATION AND SUBUNIT</scope>
</reference>
<reference key="6">
    <citation type="journal article" date="2009" name="EMBO J.">
        <title>The tail sheath structure of bacteriophage T4: a molecular machine for infecting bacteria.</title>
        <authorList>
            <person name="Aksyuk A.A."/>
            <person name="Leiman P.G."/>
            <person name="Kurochkina L.P."/>
            <person name="Shneider M.M."/>
            <person name="Kostyuchenko V.A."/>
            <person name="Mesyanzhinov V.V."/>
            <person name="Rossmann M.G."/>
        </authorList>
    </citation>
    <scope>X-RAY CRYSTALLOGRAPHY (3.5 ANGSTROMS) OF 1-509</scope>
</reference>
<dbReference type="EMBL" id="M19085">
    <property type="protein sequence ID" value="AAA32541.1"/>
    <property type="molecule type" value="Genomic_DNA"/>
</dbReference>
<dbReference type="EMBL" id="AF158101">
    <property type="protein sequence ID" value="AAD42423.1"/>
    <property type="molecule type" value="Genomic_DNA"/>
</dbReference>
<dbReference type="PIR" id="A60885">
    <property type="entry name" value="A60885"/>
</dbReference>
<dbReference type="PIR" id="JF0021">
    <property type="entry name" value="GKBPT4"/>
</dbReference>
<dbReference type="RefSeq" id="NP_049780.1">
    <property type="nucleotide sequence ID" value="NC_000866.4"/>
</dbReference>
<dbReference type="PDB" id="3FO8">
    <property type="method" value="X-ray"/>
    <property type="resolution" value="1.80 A"/>
    <property type="chains" value="D=83-365"/>
</dbReference>
<dbReference type="PDB" id="3FOA">
    <property type="method" value="X-ray"/>
    <property type="resolution" value="3.50 A"/>
    <property type="chains" value="A/B/C/D=1-510"/>
</dbReference>
<dbReference type="PDB" id="3FOH">
    <property type="method" value="EM"/>
    <property type="resolution" value="15.00 A"/>
    <property type="chains" value="A/B/C/D/E/F=1-510"/>
</dbReference>
<dbReference type="PDB" id="3FOI">
    <property type="method" value="EM"/>
    <property type="resolution" value="16.00 A"/>
    <property type="chains" value="A/B/C/D/E/F=1-510"/>
</dbReference>
<dbReference type="PDB" id="3J2M">
    <property type="method" value="EM"/>
    <property type="resolution" value="15.00 A"/>
    <property type="chains" value="U/V/W/X/Y/Z=1-659"/>
</dbReference>
<dbReference type="PDB" id="3J2N">
    <property type="method" value="EM"/>
    <property type="resolution" value="16.00 A"/>
    <property type="chains" value="U/V/W/X/Y/Z=1-659"/>
</dbReference>
<dbReference type="PDBsum" id="3FO8"/>
<dbReference type="PDBsum" id="3FOA"/>
<dbReference type="PDBsum" id="3FOH"/>
<dbReference type="PDBsum" id="3FOI"/>
<dbReference type="PDBsum" id="3J2M"/>
<dbReference type="PDBsum" id="3J2N"/>
<dbReference type="SMR" id="P13332"/>
<dbReference type="TCDB" id="1.K.1.1.1">
    <property type="family name" value="the gp27/5 t4-baseplate (t4-bp) family"/>
</dbReference>
<dbReference type="GeneID" id="1258597"/>
<dbReference type="KEGG" id="vg:1258597"/>
<dbReference type="OrthoDB" id="879at10239"/>
<dbReference type="EvolutionaryTrace" id="P13332"/>
<dbReference type="Proteomes" id="UP000009087">
    <property type="component" value="Segment"/>
</dbReference>
<dbReference type="GO" id="GO:0098027">
    <property type="term" value="C:virus tail, sheath"/>
    <property type="evidence" value="ECO:0000314"/>
    <property type="project" value="UniProtKB"/>
</dbReference>
<dbReference type="GO" id="GO:0099000">
    <property type="term" value="P:symbiont genome ejection through host cell envelope, contractile tail mechanism"/>
    <property type="evidence" value="ECO:0007669"/>
    <property type="project" value="UniProtKB-KW"/>
</dbReference>
<dbReference type="Gene3D" id="2.40.10.380">
    <property type="match status" value="1"/>
</dbReference>
<dbReference type="Gene3D" id="3.40.50.11780">
    <property type="match status" value="1"/>
</dbReference>
<dbReference type="InterPro" id="IPR054565">
    <property type="entry name" value="Gp18-like_dom_I"/>
</dbReference>
<dbReference type="InterPro" id="IPR054564">
    <property type="entry name" value="Gp18_domIII_N"/>
</dbReference>
<dbReference type="InterPro" id="IPR035326">
    <property type="entry name" value="Phage_sheath-like_beta"/>
</dbReference>
<dbReference type="InterPro" id="IPR035089">
    <property type="entry name" value="Phage_sheath_subtilisin"/>
</dbReference>
<dbReference type="InterPro" id="IPR052042">
    <property type="entry name" value="Phage_Tail_Sheath_Structural"/>
</dbReference>
<dbReference type="InterPro" id="IPR020287">
    <property type="entry name" value="Tail_sheath_C"/>
</dbReference>
<dbReference type="PANTHER" id="PTHR35861">
    <property type="match status" value="1"/>
</dbReference>
<dbReference type="PANTHER" id="PTHR35861:SF1">
    <property type="entry name" value="PHAGE TAIL SHEATH PROTEIN"/>
    <property type="match status" value="1"/>
</dbReference>
<dbReference type="Pfam" id="PF22639">
    <property type="entry name" value="Gp18_dom_I"/>
    <property type="match status" value="1"/>
</dbReference>
<dbReference type="Pfam" id="PF22671">
    <property type="entry name" value="Gp18_domIII_N"/>
    <property type="match status" value="1"/>
</dbReference>
<dbReference type="Pfam" id="PF04984">
    <property type="entry name" value="Phage_sheath_1"/>
    <property type="match status" value="1"/>
</dbReference>
<dbReference type="Pfam" id="PF17482">
    <property type="entry name" value="Phage_sheath_1C"/>
    <property type="match status" value="1"/>
</dbReference>
<dbReference type="Pfam" id="PF17481">
    <property type="entry name" value="Phage_sheath_domII"/>
    <property type="match status" value="1"/>
</dbReference>
<accession>P13332</accession>
<accession>Q9T0U3</accession>
<proteinExistence type="evidence at protein level"/>
<keyword id="KW-0002">3D-structure</keyword>
<keyword id="KW-0903">Direct protein sequencing</keyword>
<keyword id="KW-1185">Reference proteome</keyword>
<keyword id="KW-1242">Viral contractile tail ejection system</keyword>
<keyword id="KW-1171">Viral genome ejection through host cell envelope</keyword>
<keyword id="KW-1162">Viral penetration into host cytoplasm</keyword>
<keyword id="KW-1227">Viral tail protein</keyword>
<keyword id="KW-1229">Viral tail sheath protein</keyword>
<keyword id="KW-0946">Virion</keyword>
<keyword id="KW-1160">Virus entry into host cell</keyword>
<organismHost>
    <name type="scientific">Escherichia coli</name>
    <dbReference type="NCBI Taxonomy" id="562"/>
</organismHost>
<organism>
    <name type="scientific">Enterobacteria phage T4</name>
    <name type="common">Bacteriophage T4</name>
    <dbReference type="NCBI Taxonomy" id="10665"/>
    <lineage>
        <taxon>Viruses</taxon>
        <taxon>Duplodnaviria</taxon>
        <taxon>Heunggongvirae</taxon>
        <taxon>Uroviricota</taxon>
        <taxon>Caudoviricetes</taxon>
        <taxon>Straboviridae</taxon>
        <taxon>Tevenvirinae</taxon>
        <taxon>Tequatrovirus</taxon>
    </lineage>
</organism>
<name>TSP_BPT4</name>
<protein>
    <recommendedName>
        <fullName>Tail sheath protein</fullName>
        <shortName>TSP</shortName>
    </recommendedName>
    <alternativeName>
        <fullName>Gene product 18</fullName>
        <shortName>gp18</shortName>
    </alternativeName>
</protein>
<sequence>MTLLSPGIELKETTVQSTVVNNSTGTAALAGKFQWGPAFQIKQVTNEVDLVNTFGQPTAETADYFMSAMNFLQYGNDLRVVRAVDRDTAKNSSPIAGNIDYTISTPGSNYAVGDKITVKYVSDDIETEGKITEVDADGKIKKINIPTGKNYAKAKEVGEYPTLGSNWTAEISSSSSGLAAVITLGKIITDSGILLAEIENAEAAMTAVDFQANLKKYGIPGVVALYPGELGDKIEIEIVSKADYAKGASALLPIYPGGGTRASTAKAVFGYGPQTDSQYAIIVRRNDAIVQSVVLSTKRGEKDIYDSNIYIDDFFAKGGSEYIFATAQNWPEGFSGILTLSGGLSSNAEVTAGDLMEAWDFFADRESVDVQLFIAGSCAGESLETASTVQKHVVSIGDARQDCLVLCSPPRETVVGIPVTRAVDNLVNWRTAAGSYTDNNFNISSTYAAIDGNHKYQYDKYNDVNRWVPLAADIAGLCARTDNVSQTWMSPAGYNRGQILNVIKLAIETRQAQRDRLYQEAINPVTGTGGDGYVLYGDKTATSVPSPFDRINVRRLFNMLKTNIGRSSKYRLFELNNAFTRSSFRTETAQYLQGNKALGGIYEYRVVCDTTNNTPSVIDRNEFVATFYIQPARSINYITLNFVATATGADFDELTGLAG</sequence>